<gene>
    <name evidence="1" type="primary">apt</name>
    <name type="ordered locus">XOO2562</name>
</gene>
<keyword id="KW-0963">Cytoplasm</keyword>
<keyword id="KW-0328">Glycosyltransferase</keyword>
<keyword id="KW-0660">Purine salvage</keyword>
<keyword id="KW-0808">Transferase</keyword>
<name>APT_XANOM</name>
<proteinExistence type="inferred from homology"/>
<feature type="chain" id="PRO_1000000373" description="Adenine phosphoribosyltransferase">
    <location>
        <begin position="1"/>
        <end position="186"/>
    </location>
</feature>
<dbReference type="EC" id="2.4.2.7" evidence="1"/>
<dbReference type="EMBL" id="AP008229">
    <property type="protein sequence ID" value="BAE69317.1"/>
    <property type="molecule type" value="Genomic_DNA"/>
</dbReference>
<dbReference type="RefSeq" id="WP_011259319.1">
    <property type="nucleotide sequence ID" value="NC_007705.1"/>
</dbReference>
<dbReference type="SMR" id="Q2P2B0"/>
<dbReference type="KEGG" id="xom:XOO2562"/>
<dbReference type="HOGENOM" id="CLU_063339_3_0_6"/>
<dbReference type="UniPathway" id="UPA00588">
    <property type="reaction ID" value="UER00646"/>
</dbReference>
<dbReference type="GO" id="GO:0005737">
    <property type="term" value="C:cytoplasm"/>
    <property type="evidence" value="ECO:0007669"/>
    <property type="project" value="UniProtKB-SubCell"/>
</dbReference>
<dbReference type="GO" id="GO:0002055">
    <property type="term" value="F:adenine binding"/>
    <property type="evidence" value="ECO:0007669"/>
    <property type="project" value="TreeGrafter"/>
</dbReference>
<dbReference type="GO" id="GO:0003999">
    <property type="term" value="F:adenine phosphoribosyltransferase activity"/>
    <property type="evidence" value="ECO:0007669"/>
    <property type="project" value="UniProtKB-UniRule"/>
</dbReference>
<dbReference type="GO" id="GO:0016208">
    <property type="term" value="F:AMP binding"/>
    <property type="evidence" value="ECO:0007669"/>
    <property type="project" value="TreeGrafter"/>
</dbReference>
<dbReference type="GO" id="GO:0006168">
    <property type="term" value="P:adenine salvage"/>
    <property type="evidence" value="ECO:0007669"/>
    <property type="project" value="InterPro"/>
</dbReference>
<dbReference type="GO" id="GO:0044209">
    <property type="term" value="P:AMP salvage"/>
    <property type="evidence" value="ECO:0007669"/>
    <property type="project" value="UniProtKB-UniRule"/>
</dbReference>
<dbReference type="GO" id="GO:0006166">
    <property type="term" value="P:purine ribonucleoside salvage"/>
    <property type="evidence" value="ECO:0007669"/>
    <property type="project" value="UniProtKB-KW"/>
</dbReference>
<dbReference type="CDD" id="cd06223">
    <property type="entry name" value="PRTases_typeI"/>
    <property type="match status" value="1"/>
</dbReference>
<dbReference type="FunFam" id="3.40.50.2020:FF:000021">
    <property type="entry name" value="Adenine phosphoribosyltransferase"/>
    <property type="match status" value="1"/>
</dbReference>
<dbReference type="Gene3D" id="3.40.50.2020">
    <property type="match status" value="1"/>
</dbReference>
<dbReference type="HAMAP" id="MF_00004">
    <property type="entry name" value="Aden_phosphoribosyltr"/>
    <property type="match status" value="1"/>
</dbReference>
<dbReference type="InterPro" id="IPR005764">
    <property type="entry name" value="Ade_phspho_trans"/>
</dbReference>
<dbReference type="InterPro" id="IPR000836">
    <property type="entry name" value="PRibTrfase_dom"/>
</dbReference>
<dbReference type="InterPro" id="IPR029057">
    <property type="entry name" value="PRTase-like"/>
</dbReference>
<dbReference type="InterPro" id="IPR050054">
    <property type="entry name" value="UPRTase/APRTase"/>
</dbReference>
<dbReference type="NCBIfam" id="TIGR01090">
    <property type="entry name" value="apt"/>
    <property type="match status" value="1"/>
</dbReference>
<dbReference type="NCBIfam" id="NF002634">
    <property type="entry name" value="PRK02304.1-3"/>
    <property type="match status" value="1"/>
</dbReference>
<dbReference type="NCBIfam" id="NF002636">
    <property type="entry name" value="PRK02304.1-5"/>
    <property type="match status" value="1"/>
</dbReference>
<dbReference type="PANTHER" id="PTHR32315">
    <property type="entry name" value="ADENINE PHOSPHORIBOSYLTRANSFERASE"/>
    <property type="match status" value="1"/>
</dbReference>
<dbReference type="PANTHER" id="PTHR32315:SF3">
    <property type="entry name" value="ADENINE PHOSPHORIBOSYLTRANSFERASE"/>
    <property type="match status" value="1"/>
</dbReference>
<dbReference type="Pfam" id="PF00156">
    <property type="entry name" value="Pribosyltran"/>
    <property type="match status" value="1"/>
</dbReference>
<dbReference type="SUPFAM" id="SSF53271">
    <property type="entry name" value="PRTase-like"/>
    <property type="match status" value="1"/>
</dbReference>
<dbReference type="PROSITE" id="PS00103">
    <property type="entry name" value="PUR_PYR_PR_TRANSFER"/>
    <property type="match status" value="1"/>
</dbReference>
<accession>Q2P2B0</accession>
<reference key="1">
    <citation type="journal article" date="2005" name="Jpn. Agric. Res. Q.">
        <title>Genome sequence of Xanthomonas oryzae pv. oryzae suggests contribution of large numbers of effector genes and insertion sequences to its race diversity.</title>
        <authorList>
            <person name="Ochiai H."/>
            <person name="Inoue Y."/>
            <person name="Takeya M."/>
            <person name="Sasaki A."/>
            <person name="Kaku H."/>
        </authorList>
    </citation>
    <scope>NUCLEOTIDE SEQUENCE [LARGE SCALE GENOMIC DNA]</scope>
    <source>
        <strain>MAFF 311018</strain>
    </source>
</reference>
<protein>
    <recommendedName>
        <fullName evidence="1">Adenine phosphoribosyltransferase</fullName>
        <shortName evidence="1">APRT</shortName>
        <ecNumber evidence="1">2.4.2.7</ecNumber>
    </recommendedName>
</protein>
<sequence length="186" mass="19983">MTDCSRCAGTNASGPNHWSERIRDIVDFPKPGIVFKDITPLLSDGPDFASALDEMAQPWRTTPLDAVLGIEALGFILGAALARELRTGFVPVRKPGKLPGRTLIREYALEYGTDRIEMHEGALPRGARVLIVDDVLATGGTLRAALGLAAQLELEIVGAAVLVELLALQGRQKWADDVPLLATLSF</sequence>
<evidence type="ECO:0000255" key="1">
    <source>
        <dbReference type="HAMAP-Rule" id="MF_00004"/>
    </source>
</evidence>
<comment type="function">
    <text evidence="1">Catalyzes a salvage reaction resulting in the formation of AMP, that is energically less costly than de novo synthesis.</text>
</comment>
<comment type="catalytic activity">
    <reaction evidence="1">
        <text>AMP + diphosphate = 5-phospho-alpha-D-ribose 1-diphosphate + adenine</text>
        <dbReference type="Rhea" id="RHEA:16609"/>
        <dbReference type="ChEBI" id="CHEBI:16708"/>
        <dbReference type="ChEBI" id="CHEBI:33019"/>
        <dbReference type="ChEBI" id="CHEBI:58017"/>
        <dbReference type="ChEBI" id="CHEBI:456215"/>
        <dbReference type="EC" id="2.4.2.7"/>
    </reaction>
</comment>
<comment type="pathway">
    <text evidence="1">Purine metabolism; AMP biosynthesis via salvage pathway; AMP from adenine: step 1/1.</text>
</comment>
<comment type="subunit">
    <text evidence="1">Homodimer.</text>
</comment>
<comment type="subcellular location">
    <subcellularLocation>
        <location evidence="1">Cytoplasm</location>
    </subcellularLocation>
</comment>
<comment type="similarity">
    <text evidence="1">Belongs to the purine/pyrimidine phosphoribosyltransferase family.</text>
</comment>
<organism>
    <name type="scientific">Xanthomonas oryzae pv. oryzae (strain MAFF 311018)</name>
    <dbReference type="NCBI Taxonomy" id="342109"/>
    <lineage>
        <taxon>Bacteria</taxon>
        <taxon>Pseudomonadati</taxon>
        <taxon>Pseudomonadota</taxon>
        <taxon>Gammaproteobacteria</taxon>
        <taxon>Lysobacterales</taxon>
        <taxon>Lysobacteraceae</taxon>
        <taxon>Xanthomonas</taxon>
    </lineage>
</organism>